<gene>
    <name evidence="1" type="primary">rlmH</name>
    <name type="ordered locus">Lreu_0027</name>
</gene>
<comment type="function">
    <text evidence="1">Specifically methylates the pseudouridine at position 1915 (m3Psi1915) in 23S rRNA.</text>
</comment>
<comment type="catalytic activity">
    <reaction evidence="1">
        <text>pseudouridine(1915) in 23S rRNA + S-adenosyl-L-methionine = N(3)-methylpseudouridine(1915) in 23S rRNA + S-adenosyl-L-homocysteine + H(+)</text>
        <dbReference type="Rhea" id="RHEA:42752"/>
        <dbReference type="Rhea" id="RHEA-COMP:10221"/>
        <dbReference type="Rhea" id="RHEA-COMP:10222"/>
        <dbReference type="ChEBI" id="CHEBI:15378"/>
        <dbReference type="ChEBI" id="CHEBI:57856"/>
        <dbReference type="ChEBI" id="CHEBI:59789"/>
        <dbReference type="ChEBI" id="CHEBI:65314"/>
        <dbReference type="ChEBI" id="CHEBI:74486"/>
        <dbReference type="EC" id="2.1.1.177"/>
    </reaction>
</comment>
<comment type="subunit">
    <text evidence="1">Homodimer.</text>
</comment>
<comment type="subcellular location">
    <subcellularLocation>
        <location evidence="1">Cytoplasm</location>
    </subcellularLocation>
</comment>
<comment type="similarity">
    <text evidence="1">Belongs to the RNA methyltransferase RlmH family.</text>
</comment>
<protein>
    <recommendedName>
        <fullName evidence="1">Ribosomal RNA large subunit methyltransferase H</fullName>
        <ecNumber evidence="1">2.1.1.177</ecNumber>
    </recommendedName>
    <alternativeName>
        <fullName evidence="1">23S rRNA (pseudouridine1915-N3)-methyltransferase</fullName>
    </alternativeName>
    <alternativeName>
        <fullName evidence="1">23S rRNA m3Psi1915 methyltransferase</fullName>
    </alternativeName>
    <alternativeName>
        <fullName evidence="1">rRNA (pseudouridine-N3-)-methyltransferase RlmH</fullName>
    </alternativeName>
</protein>
<dbReference type="EC" id="2.1.1.177" evidence="1"/>
<dbReference type="EMBL" id="CP000705">
    <property type="protein sequence ID" value="ABQ82303.1"/>
    <property type="molecule type" value="Genomic_DNA"/>
</dbReference>
<dbReference type="RefSeq" id="WP_011953354.1">
    <property type="nucleotide sequence ID" value="NZ_AZDD01000013.1"/>
</dbReference>
<dbReference type="SMR" id="A5VHH9"/>
<dbReference type="STRING" id="557436.Lreu_0027"/>
<dbReference type="KEGG" id="lre:Lreu_0027"/>
<dbReference type="eggNOG" id="COG1576">
    <property type="taxonomic scope" value="Bacteria"/>
</dbReference>
<dbReference type="HOGENOM" id="CLU_100552_0_0_9"/>
<dbReference type="Proteomes" id="UP000001991">
    <property type="component" value="Chromosome"/>
</dbReference>
<dbReference type="GO" id="GO:0005737">
    <property type="term" value="C:cytoplasm"/>
    <property type="evidence" value="ECO:0007669"/>
    <property type="project" value="UniProtKB-SubCell"/>
</dbReference>
<dbReference type="GO" id="GO:0070038">
    <property type="term" value="F:rRNA (pseudouridine-N3-)-methyltransferase activity"/>
    <property type="evidence" value="ECO:0007669"/>
    <property type="project" value="UniProtKB-UniRule"/>
</dbReference>
<dbReference type="CDD" id="cd18081">
    <property type="entry name" value="RlmH-like"/>
    <property type="match status" value="1"/>
</dbReference>
<dbReference type="Gene3D" id="3.40.1280.10">
    <property type="match status" value="1"/>
</dbReference>
<dbReference type="HAMAP" id="MF_00658">
    <property type="entry name" value="23SrRNA_methyltr_H"/>
    <property type="match status" value="1"/>
</dbReference>
<dbReference type="InterPro" id="IPR029028">
    <property type="entry name" value="Alpha/beta_knot_MTases"/>
</dbReference>
<dbReference type="InterPro" id="IPR003742">
    <property type="entry name" value="RlmH-like"/>
</dbReference>
<dbReference type="InterPro" id="IPR029026">
    <property type="entry name" value="tRNA_m1G_MTases_N"/>
</dbReference>
<dbReference type="NCBIfam" id="NF000985">
    <property type="entry name" value="PRK00103.1-3"/>
    <property type="match status" value="1"/>
</dbReference>
<dbReference type="NCBIfam" id="TIGR00246">
    <property type="entry name" value="tRNA_RlmH_YbeA"/>
    <property type="match status" value="1"/>
</dbReference>
<dbReference type="PANTHER" id="PTHR33603">
    <property type="entry name" value="METHYLTRANSFERASE"/>
    <property type="match status" value="1"/>
</dbReference>
<dbReference type="PANTHER" id="PTHR33603:SF1">
    <property type="entry name" value="RIBOSOMAL RNA LARGE SUBUNIT METHYLTRANSFERASE H"/>
    <property type="match status" value="1"/>
</dbReference>
<dbReference type="Pfam" id="PF02590">
    <property type="entry name" value="SPOUT_MTase"/>
    <property type="match status" value="1"/>
</dbReference>
<dbReference type="PIRSF" id="PIRSF004505">
    <property type="entry name" value="MT_bac"/>
    <property type="match status" value="1"/>
</dbReference>
<dbReference type="SUPFAM" id="SSF75217">
    <property type="entry name" value="alpha/beta knot"/>
    <property type="match status" value="1"/>
</dbReference>
<organism>
    <name type="scientific">Limosilactobacillus reuteri (strain DSM 20016)</name>
    <name type="common">Lactobacillus reuteri</name>
    <dbReference type="NCBI Taxonomy" id="557436"/>
    <lineage>
        <taxon>Bacteria</taxon>
        <taxon>Bacillati</taxon>
        <taxon>Bacillota</taxon>
        <taxon>Bacilli</taxon>
        <taxon>Lactobacillales</taxon>
        <taxon>Lactobacillaceae</taxon>
        <taxon>Limosilactobacillus</taxon>
    </lineage>
</organism>
<keyword id="KW-0963">Cytoplasm</keyword>
<keyword id="KW-0489">Methyltransferase</keyword>
<keyword id="KW-1185">Reference proteome</keyword>
<keyword id="KW-0698">rRNA processing</keyword>
<keyword id="KW-0949">S-adenosyl-L-methionine</keyword>
<keyword id="KW-0808">Transferase</keyword>
<sequence length="159" mass="18047">MNIKIIGVGKLKEKYFKAGIAEYAKRLGRYCKFEIVEVPDEKAPESLSQAEMDEVMAKEGERILDKIKDREYVYALAIKGKERSSEEFAKEINKLTTYGHSDITFVIGGSLGLSPAVLKRADAQISFGRFTLPHQLMRLVLSEQIYRAFTIINGLPYHK</sequence>
<proteinExistence type="inferred from homology"/>
<feature type="chain" id="PRO_1000061799" description="Ribosomal RNA large subunit methyltransferase H">
    <location>
        <begin position="1"/>
        <end position="159"/>
    </location>
</feature>
<feature type="binding site" evidence="1">
    <location>
        <position position="76"/>
    </location>
    <ligand>
        <name>S-adenosyl-L-methionine</name>
        <dbReference type="ChEBI" id="CHEBI:59789"/>
    </ligand>
</feature>
<feature type="binding site" evidence="1">
    <location>
        <position position="108"/>
    </location>
    <ligand>
        <name>S-adenosyl-L-methionine</name>
        <dbReference type="ChEBI" id="CHEBI:59789"/>
    </ligand>
</feature>
<reference key="1">
    <citation type="journal article" date="2011" name="PLoS Genet.">
        <title>The evolution of host specialization in the vertebrate gut symbiont Lactobacillus reuteri.</title>
        <authorList>
            <person name="Frese S.A."/>
            <person name="Benson A.K."/>
            <person name="Tannock G.W."/>
            <person name="Loach D.M."/>
            <person name="Kim J."/>
            <person name="Zhang M."/>
            <person name="Oh P.L."/>
            <person name="Heng N.C."/>
            <person name="Patil P.B."/>
            <person name="Juge N."/>
            <person name="Mackenzie D.A."/>
            <person name="Pearson B.M."/>
            <person name="Lapidus A."/>
            <person name="Dalin E."/>
            <person name="Tice H."/>
            <person name="Goltsman E."/>
            <person name="Land M."/>
            <person name="Hauser L."/>
            <person name="Ivanova N."/>
            <person name="Kyrpides N.C."/>
            <person name="Walter J."/>
        </authorList>
    </citation>
    <scope>NUCLEOTIDE SEQUENCE [LARGE SCALE GENOMIC DNA]</scope>
    <source>
        <strain>DSM 20016</strain>
    </source>
</reference>
<accession>A5VHH9</accession>
<name>RLMH_LIMRD</name>
<evidence type="ECO:0000255" key="1">
    <source>
        <dbReference type="HAMAP-Rule" id="MF_00658"/>
    </source>
</evidence>